<comment type="function">
    <text evidence="1">S-adenosyl-L-methionine-dependent guanine N(1)-methyltransferase that catalyzes the formation of N(1)-methylguanine at position 9 (m1G9) in tRNAs. Probably not able to catalyze formation of N(1)-methyladenine at position 9 (m1A9) in tRNAs.</text>
</comment>
<comment type="catalytic activity">
    <reaction evidence="1">
        <text>guanosine(9) in tRNA + S-adenosyl-L-methionine = N(1)-methylguanosine(9) in tRNA + S-adenosyl-L-homocysteine + H(+)</text>
        <dbReference type="Rhea" id="RHEA:43156"/>
        <dbReference type="Rhea" id="RHEA-COMP:10367"/>
        <dbReference type="Rhea" id="RHEA-COMP:10368"/>
        <dbReference type="ChEBI" id="CHEBI:15378"/>
        <dbReference type="ChEBI" id="CHEBI:57856"/>
        <dbReference type="ChEBI" id="CHEBI:59789"/>
        <dbReference type="ChEBI" id="CHEBI:73542"/>
        <dbReference type="ChEBI" id="CHEBI:74269"/>
        <dbReference type="EC" id="2.1.1.221"/>
    </reaction>
</comment>
<comment type="similarity">
    <text evidence="3">Belongs to the class IV-like SAM-binding methyltransferase superfamily. TRM10 family.</text>
</comment>
<proteinExistence type="evidence at transcript level"/>
<accession>Q08DP1</accession>
<gene>
    <name type="primary">TRMT10B</name>
    <name type="synonym">RG9MTD3</name>
</gene>
<name>TM10B_BOVIN</name>
<keyword id="KW-0175">Coiled coil</keyword>
<keyword id="KW-0489">Methyltransferase</keyword>
<keyword id="KW-1185">Reference proteome</keyword>
<keyword id="KW-0949">S-adenosyl-L-methionine</keyword>
<keyword id="KW-0808">Transferase</keyword>
<reference key="1">
    <citation type="submission" date="2006-09" db="EMBL/GenBank/DDBJ databases">
        <authorList>
            <consortium name="NIH - Mammalian Gene Collection (MGC) project"/>
        </authorList>
    </citation>
    <scope>NUCLEOTIDE SEQUENCE [LARGE SCALE MRNA]</scope>
    <source>
        <strain>Hereford</strain>
        <tissue>Fetal muscle</tissue>
    </source>
</reference>
<dbReference type="EC" id="2.1.1.221" evidence="1"/>
<dbReference type="EMBL" id="BC123639">
    <property type="protein sequence ID" value="AAI23640.1"/>
    <property type="molecule type" value="mRNA"/>
</dbReference>
<dbReference type="RefSeq" id="NP_001070327.1">
    <property type="nucleotide sequence ID" value="NM_001076859.1"/>
</dbReference>
<dbReference type="RefSeq" id="XP_024851477.1">
    <property type="nucleotide sequence ID" value="XM_024995709.2"/>
</dbReference>
<dbReference type="RefSeq" id="XP_024851479.1">
    <property type="nucleotide sequence ID" value="XM_024995711.2"/>
</dbReference>
<dbReference type="SMR" id="Q08DP1"/>
<dbReference type="FunCoup" id="Q08DP1">
    <property type="interactions" value="3004"/>
</dbReference>
<dbReference type="STRING" id="9913.ENSBTAP00000049012"/>
<dbReference type="GeneID" id="516258"/>
<dbReference type="KEGG" id="bta:516258"/>
<dbReference type="CTD" id="158234"/>
<dbReference type="VEuPathDB" id="HostDB:ENSBTAG00000018922"/>
<dbReference type="InParanoid" id="Q08DP1"/>
<dbReference type="OMA" id="ALQAWFP"/>
<dbReference type="OrthoDB" id="278300at2759"/>
<dbReference type="Proteomes" id="UP000009136">
    <property type="component" value="Chromosome 8"/>
</dbReference>
<dbReference type="Bgee" id="ENSBTAG00000018922">
    <property type="expression patterns" value="Expressed in oocyte and 109 other cell types or tissues"/>
</dbReference>
<dbReference type="GO" id="GO:0005654">
    <property type="term" value="C:nucleoplasm"/>
    <property type="evidence" value="ECO:0000318"/>
    <property type="project" value="GO_Central"/>
</dbReference>
<dbReference type="GO" id="GO:0005634">
    <property type="term" value="C:nucleus"/>
    <property type="evidence" value="ECO:0000318"/>
    <property type="project" value="GO_Central"/>
</dbReference>
<dbReference type="GO" id="GO:0052905">
    <property type="term" value="F:tRNA (guanosine(9)-N1)-methyltransferase activity"/>
    <property type="evidence" value="ECO:0007669"/>
    <property type="project" value="UniProtKB-EC"/>
</dbReference>
<dbReference type="GO" id="GO:0000049">
    <property type="term" value="F:tRNA binding"/>
    <property type="evidence" value="ECO:0000318"/>
    <property type="project" value="GO_Central"/>
</dbReference>
<dbReference type="GO" id="GO:0002939">
    <property type="term" value="P:tRNA N1-guanine methylation"/>
    <property type="evidence" value="ECO:0000318"/>
    <property type="project" value="GO_Central"/>
</dbReference>
<dbReference type="CDD" id="cd18100">
    <property type="entry name" value="Trm10euk_B"/>
    <property type="match status" value="1"/>
</dbReference>
<dbReference type="FunFam" id="3.40.1280.30:FF:000002">
    <property type="entry name" value="tRNA methyltransferase 10 homolog B"/>
    <property type="match status" value="1"/>
</dbReference>
<dbReference type="Gene3D" id="3.40.1280.30">
    <property type="match status" value="1"/>
</dbReference>
<dbReference type="InterPro" id="IPR028564">
    <property type="entry name" value="MT_TRM10-typ"/>
</dbReference>
<dbReference type="InterPro" id="IPR038459">
    <property type="entry name" value="MT_TRM10-typ_sf"/>
</dbReference>
<dbReference type="InterPro" id="IPR047911">
    <property type="entry name" value="Trm10_B_MTase_dom"/>
</dbReference>
<dbReference type="InterPro" id="IPR007356">
    <property type="entry name" value="tRNA_m1G_MeTrfase_euk"/>
</dbReference>
<dbReference type="InterPro" id="IPR016009">
    <property type="entry name" value="tRNA_MeTrfase_TRMD/TRM10"/>
</dbReference>
<dbReference type="PANTHER" id="PTHR13563">
    <property type="entry name" value="TRNA (GUANINE-9-) METHYLTRANSFERASE"/>
    <property type="match status" value="1"/>
</dbReference>
<dbReference type="PANTHER" id="PTHR13563:SF19">
    <property type="entry name" value="TRNA METHYLTRANSFERASE 10 HOMOLOG B"/>
    <property type="match status" value="1"/>
</dbReference>
<dbReference type="Pfam" id="PF01746">
    <property type="entry name" value="tRNA_m1G_MT"/>
    <property type="match status" value="1"/>
</dbReference>
<dbReference type="PROSITE" id="PS51675">
    <property type="entry name" value="SAM_MT_TRM10"/>
    <property type="match status" value="1"/>
</dbReference>
<sequence>MDWKLEGSAQKTESRVLQEHEITLDDPGEDGVSESFQLLQIDVGCEHWEQETLPTGSAAWCSKNVQRKQRHWEKIVAAKKSKRKQEKERRKANRVENSGIYPQHSKRFLRSLIKERLLEAKHSGPRLCIDLSMTNHMSKKELSRLAGQIRRLYGSNKKADRPFWIYLTGFTTDSPLYEECLRMNDGFSSYLLDRTEEDCFSLFPLETLVYLTPDSDHALENVDLNKVYILGGLVDESIQKKVTFQKAQEHSVKTARLPIQEYMVKCQNGKNYHSEILTINQVFDILSTYFETQNWPEALKKGVSSRKGYVLRNSVE</sequence>
<protein>
    <recommendedName>
        <fullName>tRNA methyltransferase 10 homolog B</fullName>
        <ecNumber evidence="1">2.1.1.221</ecNumber>
    </recommendedName>
    <alternativeName>
        <fullName>RNA (guanine-9-)-methyltransferase domain-containing protein 3</fullName>
    </alternativeName>
    <alternativeName>
        <fullName>tRNA (guanine(9)-N(1))-methyltransferase TRMT10B</fullName>
    </alternativeName>
</protein>
<evidence type="ECO:0000250" key="1">
    <source>
        <dbReference type="UniProtKB" id="Q6PF06"/>
    </source>
</evidence>
<evidence type="ECO:0000255" key="2"/>
<evidence type="ECO:0000255" key="3">
    <source>
        <dbReference type="PROSITE-ProRule" id="PRU01012"/>
    </source>
</evidence>
<evidence type="ECO:0000256" key="4">
    <source>
        <dbReference type="SAM" id="MobiDB-lite"/>
    </source>
</evidence>
<feature type="chain" id="PRO_0000311320" description="tRNA methyltransferase 10 homolog B">
    <location>
        <begin position="1"/>
        <end position="316"/>
    </location>
</feature>
<feature type="domain" description="SAM-dependent MTase TRM10-type" evidence="3">
    <location>
        <begin position="113"/>
        <end position="310"/>
    </location>
</feature>
<feature type="region of interest" description="Disordered" evidence="4">
    <location>
        <begin position="77"/>
        <end position="96"/>
    </location>
</feature>
<feature type="coiled-coil region" evidence="2">
    <location>
        <begin position="73"/>
        <end position="98"/>
    </location>
</feature>
<organism>
    <name type="scientific">Bos taurus</name>
    <name type="common">Bovine</name>
    <dbReference type="NCBI Taxonomy" id="9913"/>
    <lineage>
        <taxon>Eukaryota</taxon>
        <taxon>Metazoa</taxon>
        <taxon>Chordata</taxon>
        <taxon>Craniata</taxon>
        <taxon>Vertebrata</taxon>
        <taxon>Euteleostomi</taxon>
        <taxon>Mammalia</taxon>
        <taxon>Eutheria</taxon>
        <taxon>Laurasiatheria</taxon>
        <taxon>Artiodactyla</taxon>
        <taxon>Ruminantia</taxon>
        <taxon>Pecora</taxon>
        <taxon>Bovidae</taxon>
        <taxon>Bovinae</taxon>
        <taxon>Bos</taxon>
    </lineage>
</organism>